<sequence length="421" mass="47924">MWRWSTGVRTMLGYAMCFLALGSALTVRLHSTRTNLPQYLTREIGDDEFEELLRSSASAGHKWHVEQFVDGSRCYVPETEQNMAPVPDDLLERGIKLVEEATVGKKLEYLPISYWGYKFINSELNKTVIQHKDQHQVLLGSMVKADPQTVQHSLERDEDSYYISERFGDGDLCSLLEEDRTVEVQYRCKYDTPLEIILDLKEYETCRYTMLVSIPSLCELPEFGPYTRQTPANTIYCTAPATPEFNIATLVEAYKPTFLGHGFYHLAPHANLTHKETTAMLMYHQQPIPGNEEDDGTMDSAFIKHSTMAYMQLLEMGLLNGPDGLPFSEEGNFTVYAKVIGFDGGLITVTRFQISHGEVIIDHVVPEVLEDMEQGNSEDYEQQAPEQLDEEEAELTSQSDDPAIMRVHLQEFITPEYDAIE</sequence>
<gene>
    <name type="primary">YOS9</name>
    <name type="ordered locus">AER171W</name>
</gene>
<feature type="signal peptide" evidence="3">
    <location>
        <begin position="1"/>
        <end position="26"/>
    </location>
</feature>
<feature type="chain" id="PRO_0000042757" description="Protein OS-9 homolog">
    <location>
        <begin position="27"/>
        <end position="421"/>
    </location>
</feature>
<feature type="domain" description="MRH" evidence="4">
    <location>
        <begin position="99"/>
        <end position="220"/>
    </location>
</feature>
<feature type="region of interest" description="Disordered" evidence="5">
    <location>
        <begin position="375"/>
        <end position="403"/>
    </location>
</feature>
<feature type="compositionally biased region" description="Acidic residues" evidence="5">
    <location>
        <begin position="375"/>
        <end position="394"/>
    </location>
</feature>
<feature type="binding site" evidence="2">
    <location>
        <position position="115"/>
    </location>
    <ligand>
        <name>a mannooligosaccharide derivative</name>
        <dbReference type="ChEBI" id="CHEBI:71274"/>
    </ligand>
</feature>
<feature type="binding site" evidence="2">
    <location>
        <position position="180"/>
    </location>
    <ligand>
        <name>a mannooligosaccharide derivative</name>
        <dbReference type="ChEBI" id="CHEBI:71274"/>
    </ligand>
</feature>
<feature type="binding site" evidence="2">
    <location>
        <position position="202"/>
    </location>
    <ligand>
        <name>a mannooligosaccharide derivative</name>
        <dbReference type="ChEBI" id="CHEBI:71274"/>
    </ligand>
</feature>
<feature type="binding site" evidence="2">
    <location>
        <position position="208"/>
    </location>
    <ligand>
        <name>a mannooligosaccharide derivative</name>
        <dbReference type="ChEBI" id="CHEBI:71274"/>
    </ligand>
</feature>
<feature type="glycosylation site" description="N-linked (GlcNAc...) asparagine" evidence="3">
    <location>
        <position position="125"/>
    </location>
</feature>
<feature type="glycosylation site" description="N-linked (GlcNAc...) asparagine" evidence="3">
    <location>
        <position position="271"/>
    </location>
</feature>
<feature type="glycosylation site" description="N-linked (GlcNAc...) asparagine" evidence="3">
    <location>
        <position position="332"/>
    </location>
</feature>
<feature type="disulfide bond" evidence="4">
    <location>
        <begin position="173"/>
        <end position="206"/>
    </location>
</feature>
<feature type="disulfide bond" evidence="4">
    <location>
        <begin position="188"/>
        <end position="218"/>
    </location>
</feature>
<keyword id="KW-1015">Disulfide bond</keyword>
<keyword id="KW-0256">Endoplasmic reticulum</keyword>
<keyword id="KW-0325">Glycoprotein</keyword>
<keyword id="KW-0430">Lectin</keyword>
<keyword id="KW-0472">Membrane</keyword>
<keyword id="KW-1185">Reference proteome</keyword>
<keyword id="KW-0732">Signal</keyword>
<proteinExistence type="inferred from homology"/>
<organism>
    <name type="scientific">Eremothecium gossypii (strain ATCC 10895 / CBS 109.51 / FGSC 9923 / NRRL Y-1056)</name>
    <name type="common">Yeast</name>
    <name type="synonym">Ashbya gossypii</name>
    <dbReference type="NCBI Taxonomy" id="284811"/>
    <lineage>
        <taxon>Eukaryota</taxon>
        <taxon>Fungi</taxon>
        <taxon>Dikarya</taxon>
        <taxon>Ascomycota</taxon>
        <taxon>Saccharomycotina</taxon>
        <taxon>Saccharomycetes</taxon>
        <taxon>Saccharomycetales</taxon>
        <taxon>Saccharomycetaceae</taxon>
        <taxon>Eremothecium</taxon>
    </lineage>
</organism>
<comment type="function">
    <text evidence="1">Lectin involved in the quality control of the secretory pathway. As a member of the endoplasmic reticulum-associated degradation lumenal (ERAD-L) surveillance system, targets misfolded endoplasmic reticulum lumenal glycoproteins for degradation (By similarity).</text>
</comment>
<comment type="subunit">
    <text evidence="1">Interacts with missfolded ER lumenal proteins.</text>
</comment>
<comment type="subcellular location">
    <subcellularLocation>
        <location evidence="1">Endoplasmic reticulum membrane</location>
        <topology evidence="1">Peripheral membrane protein</topology>
        <orientation evidence="1">Lumenal side</orientation>
    </subcellularLocation>
</comment>
<comment type="similarity">
    <text evidence="6">Belongs to the OS-9 family.</text>
</comment>
<reference key="1">
    <citation type="journal article" date="2004" name="Science">
        <title>The Ashbya gossypii genome as a tool for mapping the ancient Saccharomyces cerevisiae genome.</title>
        <authorList>
            <person name="Dietrich F.S."/>
            <person name="Voegeli S."/>
            <person name="Brachat S."/>
            <person name="Lerch A."/>
            <person name="Gates K."/>
            <person name="Steiner S."/>
            <person name="Mohr C."/>
            <person name="Poehlmann R."/>
            <person name="Luedi P."/>
            <person name="Choi S."/>
            <person name="Wing R.A."/>
            <person name="Flavier A."/>
            <person name="Gaffney T.D."/>
            <person name="Philippsen P."/>
        </authorList>
    </citation>
    <scope>NUCLEOTIDE SEQUENCE [LARGE SCALE GENOMIC DNA]</scope>
    <source>
        <strain>ATCC 10895 / CBS 109.51 / FGSC 9923 / NRRL Y-1056</strain>
    </source>
</reference>
<reference key="2">
    <citation type="journal article" date="2013" name="G3 (Bethesda)">
        <title>Genomes of Ashbya fungi isolated from insects reveal four mating-type loci, numerous translocations, lack of transposons, and distinct gene duplications.</title>
        <authorList>
            <person name="Dietrich F.S."/>
            <person name="Voegeli S."/>
            <person name="Kuo S."/>
            <person name="Philippsen P."/>
        </authorList>
    </citation>
    <scope>GENOME REANNOTATION</scope>
    <source>
        <strain>ATCC 10895 / CBS 109.51 / FGSC 9923 / NRRL Y-1056</strain>
    </source>
</reference>
<protein>
    <recommendedName>
        <fullName>Protein OS-9 homolog</fullName>
    </recommendedName>
</protein>
<accession>Q756T2</accession>
<dbReference type="EMBL" id="AE016818">
    <property type="protein sequence ID" value="AAS52853.1"/>
    <property type="molecule type" value="Genomic_DNA"/>
</dbReference>
<dbReference type="RefSeq" id="NP_985029.1">
    <property type="nucleotide sequence ID" value="NM_210383.1"/>
</dbReference>
<dbReference type="SMR" id="Q756T2"/>
<dbReference type="FunCoup" id="Q756T2">
    <property type="interactions" value="98"/>
</dbReference>
<dbReference type="STRING" id="284811.Q756T2"/>
<dbReference type="GlyCosmos" id="Q756T2">
    <property type="glycosylation" value="3 sites, No reported glycans"/>
</dbReference>
<dbReference type="EnsemblFungi" id="AAS52853">
    <property type="protein sequence ID" value="AAS52853"/>
    <property type="gene ID" value="AGOS_AER171W"/>
</dbReference>
<dbReference type="GeneID" id="4621237"/>
<dbReference type="KEGG" id="ago:AGOS_AER171W"/>
<dbReference type="eggNOG" id="KOG3394">
    <property type="taxonomic scope" value="Eukaryota"/>
</dbReference>
<dbReference type="HOGENOM" id="CLU_679768_0_0_1"/>
<dbReference type="InParanoid" id="Q756T2"/>
<dbReference type="OMA" id="AVRINWI"/>
<dbReference type="OrthoDB" id="448954at2759"/>
<dbReference type="Proteomes" id="UP000000591">
    <property type="component" value="Chromosome V"/>
</dbReference>
<dbReference type="GO" id="GO:0005788">
    <property type="term" value="C:endoplasmic reticulum lumen"/>
    <property type="evidence" value="ECO:0000318"/>
    <property type="project" value="GO_Central"/>
</dbReference>
<dbReference type="GO" id="GO:0005789">
    <property type="term" value="C:endoplasmic reticulum membrane"/>
    <property type="evidence" value="ECO:0007669"/>
    <property type="project" value="UniProtKB-SubCell"/>
</dbReference>
<dbReference type="GO" id="GO:0030246">
    <property type="term" value="F:carbohydrate binding"/>
    <property type="evidence" value="ECO:0007669"/>
    <property type="project" value="UniProtKB-KW"/>
</dbReference>
<dbReference type="GO" id="GO:0030968">
    <property type="term" value="P:endoplasmic reticulum unfolded protein response"/>
    <property type="evidence" value="ECO:0007669"/>
    <property type="project" value="InterPro"/>
</dbReference>
<dbReference type="GO" id="GO:0030970">
    <property type="term" value="P:retrograde protein transport, ER to cytosol"/>
    <property type="evidence" value="ECO:0000318"/>
    <property type="project" value="GO_Central"/>
</dbReference>
<dbReference type="CDD" id="cd11745">
    <property type="entry name" value="Yos9_DD"/>
    <property type="match status" value="1"/>
</dbReference>
<dbReference type="Gene3D" id="3.10.310.60">
    <property type="match status" value="1"/>
</dbReference>
<dbReference type="Gene3D" id="2.70.130.10">
    <property type="entry name" value="Mannose-6-phosphate receptor binding domain"/>
    <property type="match status" value="1"/>
</dbReference>
<dbReference type="InterPro" id="IPR009011">
    <property type="entry name" value="Man6P_isomerase_rcpt-bd_dom_sf"/>
</dbReference>
<dbReference type="InterPro" id="IPR044865">
    <property type="entry name" value="MRH_dom"/>
</dbReference>
<dbReference type="InterPro" id="IPR045149">
    <property type="entry name" value="OS-9-like"/>
</dbReference>
<dbReference type="InterPro" id="IPR041039">
    <property type="entry name" value="Yos9_DD"/>
</dbReference>
<dbReference type="PANTHER" id="PTHR15414:SF0">
    <property type="entry name" value="ENDOPLASMIC RETICULUM LECTIN 1"/>
    <property type="match status" value="1"/>
</dbReference>
<dbReference type="PANTHER" id="PTHR15414">
    <property type="entry name" value="OS-9-RELATED"/>
    <property type="match status" value="1"/>
</dbReference>
<dbReference type="Pfam" id="PF17880">
    <property type="entry name" value="Yos9_DD"/>
    <property type="match status" value="1"/>
</dbReference>
<dbReference type="PROSITE" id="PS51914">
    <property type="entry name" value="MRH"/>
    <property type="match status" value="1"/>
</dbReference>
<evidence type="ECO:0000250" key="1"/>
<evidence type="ECO:0000250" key="2">
    <source>
        <dbReference type="UniProtKB" id="Q13438"/>
    </source>
</evidence>
<evidence type="ECO:0000255" key="3"/>
<evidence type="ECO:0000255" key="4">
    <source>
        <dbReference type="PROSITE-ProRule" id="PRU01262"/>
    </source>
</evidence>
<evidence type="ECO:0000256" key="5">
    <source>
        <dbReference type="SAM" id="MobiDB-lite"/>
    </source>
</evidence>
<evidence type="ECO:0000305" key="6"/>
<name>OS9_EREGS</name>